<proteinExistence type="inferred from homology"/>
<dbReference type="EMBL" id="Y07760">
    <property type="protein sequence ID" value="CAA69054.1"/>
    <property type="molecule type" value="Genomic_DNA"/>
</dbReference>
<dbReference type="RefSeq" id="AP_000047.1">
    <property type="nucleotide sequence ID" value="AC_000003.1"/>
</dbReference>
<dbReference type="RefSeq" id="NP_044186.1">
    <property type="nucleotide sequence ID" value="NC_001734.1"/>
</dbReference>
<dbReference type="SMR" id="Q96679"/>
<dbReference type="GeneID" id="1488948"/>
<dbReference type="KEGG" id="vg:1488948"/>
<dbReference type="Proteomes" id="UP000126130">
    <property type="component" value="Segment"/>
</dbReference>
<dbReference type="GO" id="GO:0030430">
    <property type="term" value="C:host cell cytoplasm"/>
    <property type="evidence" value="ECO:0000250"/>
    <property type="project" value="UniProtKB"/>
</dbReference>
<dbReference type="GO" id="GO:0042025">
    <property type="term" value="C:host cell nucleus"/>
    <property type="evidence" value="ECO:0007669"/>
    <property type="project" value="UniProtKB-SubCell"/>
</dbReference>
<dbReference type="GO" id="GO:1990756">
    <property type="term" value="F:ubiquitin-like ligase-substrate adaptor activity"/>
    <property type="evidence" value="ECO:0000250"/>
    <property type="project" value="UniProtKB"/>
</dbReference>
<dbReference type="GO" id="GO:0052150">
    <property type="term" value="P:symbiont-mediated perturbation of host apoptosis"/>
    <property type="evidence" value="ECO:0007669"/>
    <property type="project" value="UniProtKB-KW"/>
</dbReference>
<dbReference type="GO" id="GO:0039648">
    <property type="term" value="P:symbiont-mediated perturbation of host ubiquitin-like protein modification"/>
    <property type="evidence" value="ECO:0000250"/>
    <property type="project" value="UniProtKB"/>
</dbReference>
<dbReference type="InterPro" id="IPR002612">
    <property type="entry name" value="Adeno_E1B_55kDa"/>
</dbReference>
<dbReference type="InterPro" id="IPR011050">
    <property type="entry name" value="Pectin_lyase_fold/virulence"/>
</dbReference>
<dbReference type="Pfam" id="PF01696">
    <property type="entry name" value="Adeno_E1B_55K"/>
    <property type="match status" value="1"/>
</dbReference>
<dbReference type="SUPFAM" id="SSF51126">
    <property type="entry name" value="Pectin lyase-like"/>
    <property type="match status" value="1"/>
</dbReference>
<comment type="function">
    <text evidence="1">Plays a major role to prevent cellular inhibition of viral genome replication. Assembles an SCF-like E3 ubiquitin ligase complex based on the cellular proteins ELOB, ELOC, CUL5 and RBX1, in cooperation with viral E4orf6. This viral RING-type ligase ubiquitinates cellular substrates and targets them to proteasomal degradation: TP53/p53, LIG4, MRE11-RAD50-NBS1 (MRN) complex, ITGA3, DAXX and BLM. E1B-55K probably acts as the substrate-specific adapter of the SCF-like E3 ubiquitin ligase complex. Degradation of host TP53/p53 activity is essential for preventing E1A-induced TP53 accumulation that would otherwise lead to cell apoptosis and growth arrest. E1B-55K also inactivates TP53 transcription-factor activity by binding its transactivation domain. E1B-55K also functions as a SUMO1 E3 ligase for TP53 which causes the latter to be sequestered in promyelocytic leukemia (PML) nuclear bodies thereby contributing to maximal inhibition of TP53 function.</text>
</comment>
<comment type="subunit">
    <text evidence="1 2">Interacts with host PML-4 and PML-5; this interaction promotes efficient subnuclear targeting of E1B-55K to PML nuclear bodies. Interacts with E4-ORF3 protein (By similarity). Interacts with E4-ORF6 protein (By similarity).</text>
</comment>
<comment type="subcellular location">
    <subcellularLocation>
        <location evidence="1">Host nucleus</location>
    </subcellularLocation>
    <subcellularLocation>
        <location evidence="1">Host cytoplasm</location>
    </subcellularLocation>
    <text evidence="1">Colocalizes with host TP53 to host PML nuclear bodies. PML localization of E1B-55K is necessary for E1B-55K-dependent SUMOylation of TP53.</text>
</comment>
<comment type="domain">
    <text evidence="1">Contains a PML interaction motif that allows the subnuclear PML localization.</text>
</comment>
<comment type="similarity">
    <text evidence="4">Belongs to the adenoviridae E1B 55 kDa protein family.</text>
</comment>
<evidence type="ECO:0000250" key="1">
    <source>
        <dbReference type="UniProtKB" id="P03243"/>
    </source>
</evidence>
<evidence type="ECO:0000250" key="2">
    <source>
        <dbReference type="UniProtKB" id="P03244"/>
    </source>
</evidence>
<evidence type="ECO:0000256" key="3">
    <source>
        <dbReference type="SAM" id="MobiDB-lite"/>
    </source>
</evidence>
<evidence type="ECO:0000305" key="4"/>
<organismHost>
    <name type="scientific">Canis lupus familiaris</name>
    <name type="common">Dog</name>
    <name type="synonym">Canis familiaris</name>
    <dbReference type="NCBI Taxonomy" id="9615"/>
</organismHost>
<sequence length="444" mass="49200">MEQDSDLESGRATNQRPPRVRVRGAGVRGRGRVRRRALSEGQRRSLFRLDDLQLPDSLYVTRALQRDHALEMPRGQVDFSLIEAEERRAGPTDEWYFESVKTYRAKPGDDLQTLIKNYAKISLECGAVYEINSKIVVTGACYIIGNCAVLRANLPVGTAMFEVLNVDVIPSIGFMERIVFSNILFDCRSTTAVVCCISERNTLFHNCVFSGPHMLCLDIRAGAEVRGCHFVGAVCALRSKGLYSVRVRNSIFEKCAFGVVSGSKASISHSMFKDCACCIMLGGQGTIAHSHFMATTCTDTPMNLQLCTCEGNGSHVVPLGNIHFASNREAPWPTFNANVLVRVRLYMGRRRGVFHPKQSTFSMCVIAAPRGVVQRIYLFSVYDATCAILQLGEAGDAATERLCTCGMRHNTPSLRAAYVTDTRIDREINSQDTAEFFSSDEDNL</sequence>
<feature type="chain" id="PRO_0000221731" description="E1B 55 kDa protein">
    <location>
        <begin position="1"/>
        <end position="444"/>
    </location>
</feature>
<feature type="region of interest" description="Disordered" evidence="3">
    <location>
        <begin position="1"/>
        <end position="27"/>
    </location>
</feature>
<feature type="modified residue" description="Phosphoserine" evidence="1">
    <location>
        <position position="438"/>
    </location>
</feature>
<feature type="modified residue" description="Phosphoserine" evidence="1">
    <location>
        <position position="439"/>
    </location>
</feature>
<keyword id="KW-0244">Early protein</keyword>
<keyword id="KW-1035">Host cytoplasm</keyword>
<keyword id="KW-1048">Host nucleus</keyword>
<keyword id="KW-0945">Host-virus interaction</keyword>
<keyword id="KW-1119">Modulation of host cell apoptosis by virus</keyword>
<keyword id="KW-0597">Phosphoprotein</keyword>
<accession>Q96679</accession>
<protein>
    <recommendedName>
        <fullName>E1B 55 kDa protein</fullName>
        <shortName>E1B-55K</shortName>
    </recommendedName>
    <alternativeName>
        <fullName>E1B protein, large T-antigen</fullName>
    </alternativeName>
    <alternativeName>
        <fullName>E1B-495R</fullName>
    </alternativeName>
</protein>
<name>E1B55_ADECR</name>
<reference key="1">
    <citation type="journal article" date="1997" name="J. Gen. Virol.">
        <title>Complete DNA sequence of canine adenovirus type 1.</title>
        <authorList>
            <person name="Morrison M.D."/>
            <person name="Onions D.E."/>
            <person name="Nicolson L."/>
        </authorList>
    </citation>
    <scope>NUCLEOTIDE SEQUENCE [LARGE SCALE GENOMIC DNA]</scope>
</reference>
<organism>
    <name type="scientific">Canine adenovirus serotype 1 (strain RI261)</name>
    <name type="common">CAdV-1</name>
    <name type="synonym">Canine adenovirus 1 (strain RI261)</name>
    <dbReference type="NCBI Taxonomy" id="69151"/>
    <lineage>
        <taxon>Viruses</taxon>
        <taxon>Varidnaviria</taxon>
        <taxon>Bamfordvirae</taxon>
        <taxon>Preplasmiviricota</taxon>
        <taxon>Tectiliviricetes</taxon>
        <taxon>Rowavirales</taxon>
        <taxon>Adenoviridae</taxon>
        <taxon>Mastadenovirus</taxon>
        <taxon>Canine mastadenovirus A</taxon>
    </lineage>
</organism>